<gene>
    <name type="primary">2</name>
</gene>
<proteinExistence type="inferred from homology"/>
<evidence type="ECO:0000250" key="1">
    <source>
        <dbReference type="UniProtKB" id="P03680"/>
    </source>
</evidence>
<evidence type="ECO:0000305" key="2"/>
<name>DPOL_BPB03</name>
<dbReference type="EC" id="2.7.7.7" evidence="1"/>
<dbReference type="EC" id="3.1.11.-" evidence="1"/>
<dbReference type="EMBL" id="X99260">
    <property type="protein sequence ID" value="CAA67649.1"/>
    <property type="molecule type" value="Genomic_DNA"/>
</dbReference>
<dbReference type="RefSeq" id="NP_690635.1">
    <property type="nucleotide sequence ID" value="NC_004165.1"/>
</dbReference>
<dbReference type="SMR" id="Q37882"/>
<dbReference type="KEGG" id="vg:955357"/>
<dbReference type="Proteomes" id="UP000000971">
    <property type="component" value="Segment"/>
</dbReference>
<dbReference type="GO" id="GO:0003677">
    <property type="term" value="F:DNA binding"/>
    <property type="evidence" value="ECO:0007669"/>
    <property type="project" value="UniProtKB-KW"/>
</dbReference>
<dbReference type="GO" id="GO:0003887">
    <property type="term" value="F:DNA-directed DNA polymerase activity"/>
    <property type="evidence" value="ECO:0007669"/>
    <property type="project" value="UniProtKB-KW"/>
</dbReference>
<dbReference type="GO" id="GO:0004527">
    <property type="term" value="F:exonuclease activity"/>
    <property type="evidence" value="ECO:0007669"/>
    <property type="project" value="UniProtKB-KW"/>
</dbReference>
<dbReference type="GO" id="GO:0046872">
    <property type="term" value="F:metal ion binding"/>
    <property type="evidence" value="ECO:0007669"/>
    <property type="project" value="UniProtKB-KW"/>
</dbReference>
<dbReference type="GO" id="GO:0001882">
    <property type="term" value="F:nucleoside binding"/>
    <property type="evidence" value="ECO:0007669"/>
    <property type="project" value="InterPro"/>
</dbReference>
<dbReference type="GO" id="GO:0000166">
    <property type="term" value="F:nucleotide binding"/>
    <property type="evidence" value="ECO:0007669"/>
    <property type="project" value="UniProtKB-KW"/>
</dbReference>
<dbReference type="GO" id="GO:0006260">
    <property type="term" value="P:DNA replication"/>
    <property type="evidence" value="ECO:0007669"/>
    <property type="project" value="UniProtKB-KW"/>
</dbReference>
<dbReference type="GO" id="GO:0039693">
    <property type="term" value="P:viral DNA genome replication"/>
    <property type="evidence" value="ECO:0007669"/>
    <property type="project" value="UniProtKB-KW"/>
</dbReference>
<dbReference type="Gene3D" id="4.10.80.20">
    <property type="entry name" value="DNA polymerase, domain 5"/>
    <property type="match status" value="1"/>
</dbReference>
<dbReference type="Gene3D" id="4.10.80.30">
    <property type="entry name" value="DNA polymerase, domain 6"/>
    <property type="match status" value="1"/>
</dbReference>
<dbReference type="Gene3D" id="1.10.287.690">
    <property type="entry name" value="Helix hairpin bin"/>
    <property type="match status" value="1"/>
</dbReference>
<dbReference type="Gene3D" id="3.90.1600.10">
    <property type="entry name" value="Palm domain of DNA polymerase"/>
    <property type="match status" value="1"/>
</dbReference>
<dbReference type="Gene3D" id="3.30.420.10">
    <property type="entry name" value="Ribonuclease H-like superfamily/Ribonuclease H"/>
    <property type="match status" value="1"/>
</dbReference>
<dbReference type="Gene3D" id="3.30.1770.10">
    <property type="entry name" value="TPR 1 domain of DNA polymerase"/>
    <property type="match status" value="1"/>
</dbReference>
<dbReference type="InterPro" id="IPR006172">
    <property type="entry name" value="DNA-dir_DNA_pol_B"/>
</dbReference>
<dbReference type="InterPro" id="IPR017964">
    <property type="entry name" value="DNA-dir_DNA_pol_B_CS"/>
</dbReference>
<dbReference type="InterPro" id="IPR004868">
    <property type="entry name" value="DNA-dir_DNA_pol_B_mt/vir"/>
</dbReference>
<dbReference type="InterPro" id="IPR014416">
    <property type="entry name" value="DNA-dir_DNA_polB_phi29_vir"/>
</dbReference>
<dbReference type="InterPro" id="IPR043502">
    <property type="entry name" value="DNA/RNA_pol_sf"/>
</dbReference>
<dbReference type="InterPro" id="IPR023211">
    <property type="entry name" value="DNA_pol_palm_dom_sf"/>
</dbReference>
<dbReference type="InterPro" id="IPR012337">
    <property type="entry name" value="RNaseH-like_sf"/>
</dbReference>
<dbReference type="InterPro" id="IPR036397">
    <property type="entry name" value="RNaseH_sf"/>
</dbReference>
<dbReference type="Pfam" id="PF03175">
    <property type="entry name" value="DNA_pol_B_2"/>
    <property type="match status" value="1"/>
</dbReference>
<dbReference type="PIRSF" id="PIRSF004178">
    <property type="entry name" value="Dpol_Bac_phage"/>
    <property type="match status" value="1"/>
</dbReference>
<dbReference type="PRINTS" id="PR00106">
    <property type="entry name" value="DNAPOLB"/>
</dbReference>
<dbReference type="SMART" id="SM00486">
    <property type="entry name" value="POLBc"/>
    <property type="match status" value="1"/>
</dbReference>
<dbReference type="SUPFAM" id="SSF56672">
    <property type="entry name" value="DNA/RNA polymerases"/>
    <property type="match status" value="1"/>
</dbReference>
<dbReference type="SUPFAM" id="SSF53098">
    <property type="entry name" value="Ribonuclease H-like"/>
    <property type="match status" value="1"/>
</dbReference>
<dbReference type="PROSITE" id="PS00116">
    <property type="entry name" value="DNA_POLYMERASE_B"/>
    <property type="match status" value="1"/>
</dbReference>
<keyword id="KW-0235">DNA replication</keyword>
<keyword id="KW-0238">DNA-binding</keyword>
<keyword id="KW-0239">DNA-directed DNA polymerase</keyword>
<keyword id="KW-0244">Early protein</keyword>
<keyword id="KW-0269">Exonuclease</keyword>
<keyword id="KW-0378">Hydrolase</keyword>
<keyword id="KW-0460">Magnesium</keyword>
<keyword id="KW-0479">Metal-binding</keyword>
<keyword id="KW-0540">Nuclease</keyword>
<keyword id="KW-0547">Nucleotide-binding</keyword>
<keyword id="KW-0548">Nucleotidyltransferase</keyword>
<keyword id="KW-0808">Transferase</keyword>
<keyword id="KW-1194">Viral DNA replication</keyword>
<sequence length="572" mass="66504">MPRKMFSCDFETTTKLDDCRVWAYGYMEIGNLDNYKIGNSLDEFMQWVMEIQADLYFHNLKFDGAFIVNWLEHHGFKWSNEGLPNTYNTIISKMGQWYMIDICFGYKGKRKLHTVIYDSLKKLPFPVKKIAKDFQLPLLKGDIDYHAERPVGHEITPEEYEYIKNDIEIIARALDIQFKQGLDRMTAGSDSLKGFKDILSTKKFNKVFPKLSLPMDKEIRRAYRGGFTWLNDKYKEKEIGEGMVFDVNSLYPSQMYSRPLPYGAPIVFQGKYEKDEQYPLYIQRIRFEFELKEGYIPTIQIKKNPFFKGNEYLKNSGAEPVELYLTNVDLELIQEHYEMYNVEYIDGFKFREKTGLFKEFIDKWTYVKTHEKGAKKQLAKLMFDSLYGKFASNPDVTGKVPYLKEDGSLGFRVGDEEYKDPVYTPMGVFITAWARFTTITAAQACYDRIIYCDTDSIHLTGTEVPEIIKDIVDPKKLGYWAHESTFKRAKYLRQKTYIQDIYAKEVDGKLIECSPDEATTTKFSVKCAGMTDTIKKKVTFDNFRVGFSSTGKPKPVQVNGGVVLVDSVFTIK</sequence>
<comment type="function">
    <text evidence="1">Polymerase responsible for protein-primed viral DNA replication by strand displacement with high processivity and fidelity. To start replication, the DNA polymerase forms a heterodimer with a free primer terminal protein (TP), recognizes the replication origins at both 5' ends of the linear chromosome, and initiates replication using as primer the OH-group of Ser-232 of the TP. This polymerase possesses three enzymatic activities: DNA synthesis (polymerase), primer terminal protein (TP) deoxynucleotidylation, which is the formation of a covalent linkage (phosphoester) between the hydroxyl group of a specific serine residue in TP and 5'-dAMP, a reaction directed by the second T at the 3' end, and 3' to 5' exonuclease activity. Exonuclease activity has a proofreading purpose.</text>
</comment>
<comment type="catalytic activity">
    <reaction evidence="1">
        <text>DNA(n) + a 2'-deoxyribonucleoside 5'-triphosphate = DNA(n+1) + diphosphate</text>
        <dbReference type="Rhea" id="RHEA:22508"/>
        <dbReference type="Rhea" id="RHEA-COMP:17339"/>
        <dbReference type="Rhea" id="RHEA-COMP:17340"/>
        <dbReference type="ChEBI" id="CHEBI:33019"/>
        <dbReference type="ChEBI" id="CHEBI:61560"/>
        <dbReference type="ChEBI" id="CHEBI:173112"/>
        <dbReference type="EC" id="2.7.7.7"/>
    </reaction>
</comment>
<comment type="cofactor">
    <cofactor evidence="1">
        <name>Mg(2+)</name>
        <dbReference type="ChEBI" id="CHEBI:18420"/>
    </cofactor>
</comment>
<comment type="subunit">
    <text evidence="1">Interacts with the primer terminal protein; this interaction allows the initiation of TP-primed DNA replication at both viral DNA ends. Interacts with DNA.</text>
</comment>
<comment type="domain">
    <text evidence="1">The N-terminus contains the 3'-5' exonuclease activity and strand displacement ability. The C-terminus contains the protein-primed initiation, DNA polymerization and pyrophosphorolytic activities.</text>
</comment>
<comment type="miscellaneous">
    <text evidence="1">This DNA polymerase requires a protein as a primer.</text>
</comment>
<comment type="similarity">
    <text evidence="2">Belongs to the DNA polymerase type-B family.</text>
</comment>
<organism>
    <name type="scientific">Bacillus phage B103</name>
    <name type="common">Bacteriophage B103</name>
    <dbReference type="NCBI Taxonomy" id="2994042"/>
    <lineage>
        <taxon>Viruses</taxon>
        <taxon>Duplodnaviria</taxon>
        <taxon>Heunggongvirae</taxon>
        <taxon>Uroviricota</taxon>
        <taxon>Caudoviricetes</taxon>
        <taxon>Salasmaviridae</taxon>
        <taxon>Picovirinae</taxon>
        <taxon>Beecentumtrevirus</taxon>
        <taxon>Beecentumtrevirus B103</taxon>
    </lineage>
</organism>
<protein>
    <recommendedName>
        <fullName>DNA polymerase</fullName>
        <ecNumber evidence="1">2.7.7.7</ecNumber>
        <ecNumber evidence="1">3.1.11.-</ecNumber>
    </recommendedName>
    <alternativeName>
        <fullName evidence="2">Gene product 2</fullName>
        <shortName evidence="2">gp2</shortName>
    </alternativeName>
    <alternativeName>
        <fullName>Protein p2</fullName>
    </alternativeName>
</protein>
<reference key="1">
    <citation type="journal article" date="1997" name="Gene">
        <title>Bacteriophage B103: complete DNA sequence of its genome and relationship to other Bacillus phages.</title>
        <authorList>
            <person name="Pecenkova T."/>
            <person name="Benes V."/>
            <person name="Paces J."/>
            <person name="Vlcek C."/>
            <person name="Paces V."/>
        </authorList>
    </citation>
    <scope>NUCLEOTIDE SEQUENCE [LARGE SCALE GENOMIC DNA]</scope>
</reference>
<feature type="chain" id="PRO_0000046540" description="DNA polymerase">
    <location>
        <begin position="1"/>
        <end position="572"/>
    </location>
</feature>
<feature type="region of interest" description="3'-5' exonuclease and strand displacement activities" evidence="1">
    <location>
        <begin position="1"/>
        <end position="222"/>
    </location>
</feature>
<feature type="region of interest" description="Interaction with the primer terminal protein" evidence="1">
    <location>
        <begin position="56"/>
        <end position="66"/>
    </location>
</feature>
<feature type="region of interest" description="DNA-binding; Involved in the formation of a stable complex between TP and phi29 DNA polymerase" evidence="1">
    <location>
        <begin position="223"/>
        <end position="226"/>
    </location>
</feature>
<feature type="region of interest" description="Initiation, polymerization and pyrophosphorolytic activities" evidence="1">
    <location>
        <begin position="227"/>
        <end position="572"/>
    </location>
</feature>
<feature type="binding site" evidence="1">
    <location>
        <position position="142"/>
    </location>
    <ligand>
        <name>Mg(2+)</name>
        <dbReference type="ChEBI" id="CHEBI:18420"/>
        <label>1</label>
    </ligand>
</feature>
<feature type="binding site" evidence="1">
    <location>
        <position position="166"/>
    </location>
    <ligand>
        <name>Mg(2+)</name>
        <dbReference type="ChEBI" id="CHEBI:18420"/>
        <label>1</label>
    </ligand>
</feature>
<feature type="binding site" evidence="1">
    <location>
        <position position="246"/>
    </location>
    <ligand>
        <name>Mg(2+)</name>
        <dbReference type="ChEBI" id="CHEBI:18420"/>
        <label>2</label>
        <note>catalytic</note>
    </ligand>
</feature>
<feature type="binding site" evidence="1">
    <location>
        <position position="247"/>
    </location>
    <ligand>
        <name>Mg(2+)</name>
        <dbReference type="ChEBI" id="CHEBI:18420"/>
        <label>2</label>
        <note>catalytic</note>
    </ligand>
</feature>
<feature type="binding site" evidence="1">
    <location>
        <position position="251"/>
    </location>
    <ligand>
        <name>5-methyl-UTP</name>
        <dbReference type="ChEBI" id="CHEBI:63527"/>
    </ligand>
</feature>
<feature type="binding site" evidence="1">
    <location>
        <position position="368"/>
    </location>
    <ligand>
        <name>5-methyl-UTP</name>
        <dbReference type="ChEBI" id="CHEBI:63527"/>
    </ligand>
</feature>
<feature type="binding site" evidence="1">
    <location>
        <position position="380"/>
    </location>
    <ligand>
        <name>5-methyl-UTP</name>
        <dbReference type="ChEBI" id="CHEBI:63527"/>
    </ligand>
</feature>
<feature type="binding site" evidence="1">
    <location>
        <position position="453"/>
    </location>
    <ligand>
        <name>Mg(2+)</name>
        <dbReference type="ChEBI" id="CHEBI:18420"/>
        <label>2</label>
        <note>catalytic</note>
    </ligand>
</feature>
<feature type="binding site" evidence="1">
    <location>
        <position position="455"/>
    </location>
    <ligand>
        <name>5-methyl-UTP</name>
        <dbReference type="ChEBI" id="CHEBI:63527"/>
    </ligand>
</feature>
<feature type="binding site" evidence="1">
    <location>
        <position position="455"/>
    </location>
    <ligand>
        <name>Mg(2+)</name>
        <dbReference type="ChEBI" id="CHEBI:18420"/>
        <label>2</label>
        <note>catalytic</note>
    </ligand>
</feature>
<feature type="site" description="Essential for 3'-5' exonucleolysis" evidence="1">
    <location>
        <position position="9"/>
    </location>
</feature>
<feature type="site" description="Essential for 3'-5' exonucleolysis" evidence="1">
    <location>
        <position position="11"/>
    </location>
</feature>
<feature type="site" description="Essential for 3'-5' exonucleolysis" evidence="1">
    <location>
        <position position="62"/>
    </location>
</feature>
<feature type="site" description="Involved in binding template-primer structures" evidence="1">
    <location>
        <position position="90"/>
    </location>
</feature>
<feature type="site" description="Critical for 3'-5' exonucleolysis" evidence="1">
    <location>
        <position position="119"/>
    </location>
</feature>
<feature type="site" description="Essential for 3'-5' exonucleolysis" evidence="1">
    <location>
        <position position="119"/>
    </location>
</feature>
<feature type="site" description="Essential for 3'-5' exonucleolysis" evidence="1">
    <location>
        <position position="120"/>
    </location>
</feature>
<feature type="site" description="Probably involved in binding template-primer structures" evidence="1">
    <location>
        <position position="249"/>
    </location>
</feature>
<feature type="site" description="Probably involved in nucleotide binding selection" evidence="1">
    <location>
        <position position="251"/>
    </location>
</feature>
<feature type="site" description="Probably involved in nucleotide binding selection" evidence="1">
    <location>
        <position position="380"/>
    </location>
</feature>
<feature type="site" description="Probably involved in nucleotide binding selection" evidence="1">
    <location>
        <position position="387"/>
    </location>
</feature>
<feature type="site" description="Probably involved in binding template-primer structures" evidence="1">
    <location>
        <position position="388"/>
    </location>
</feature>
<feature type="site" description="Probably involved in binding template-primer structures" evidence="1">
    <location>
        <position position="431"/>
    </location>
</feature>
<feature type="site" description="Probably involved in binding template-primer structures" evidence="1">
    <location>
        <position position="435"/>
    </location>
</feature>
<feature type="site" description="Probably involved in binding template-primer structures" evidence="1">
    <location>
        <position position="495"/>
    </location>
</feature>
<feature type="site" description="Probably involved in binding template-primer structures" evidence="1">
    <location>
        <position position="497"/>
    </location>
</feature>
<feature type="site" description="Stabilizes the primer-terminus at the polymerization active site and contributes to the coordination between the exonuclease and polymerazation activities" evidence="1">
    <location>
        <position position="526"/>
    </location>
</feature>
<accession>Q37882</accession>
<organismHost>
    <name type="scientific">Bacillus subtilis</name>
    <dbReference type="NCBI Taxonomy" id="1423"/>
</organismHost>